<evidence type="ECO:0000255" key="1">
    <source>
        <dbReference type="HAMAP-Rule" id="MF_01856"/>
    </source>
</evidence>
<evidence type="ECO:0000305" key="2"/>
<feature type="chain" id="PRO_0000211814" description="Ribosomal RNA small subunit methyltransferase B">
    <location>
        <begin position="1"/>
        <end position="429"/>
    </location>
</feature>
<feature type="active site" description="Nucleophile" evidence="1">
    <location>
        <position position="375"/>
    </location>
</feature>
<feature type="binding site" evidence="1">
    <location>
        <begin position="254"/>
        <end position="260"/>
    </location>
    <ligand>
        <name>S-adenosyl-L-methionine</name>
        <dbReference type="ChEBI" id="CHEBI:59789"/>
    </ligand>
</feature>
<feature type="binding site" evidence="1">
    <location>
        <position position="277"/>
    </location>
    <ligand>
        <name>S-adenosyl-L-methionine</name>
        <dbReference type="ChEBI" id="CHEBI:59789"/>
    </ligand>
</feature>
<feature type="binding site" evidence="1">
    <location>
        <position position="303"/>
    </location>
    <ligand>
        <name>S-adenosyl-L-methionine</name>
        <dbReference type="ChEBI" id="CHEBI:59789"/>
    </ligand>
</feature>
<feature type="binding site" evidence="1">
    <location>
        <position position="322"/>
    </location>
    <ligand>
        <name>S-adenosyl-L-methionine</name>
        <dbReference type="ChEBI" id="CHEBI:59789"/>
    </ligand>
</feature>
<name>RSMB_YERPE</name>
<organism>
    <name type="scientific">Yersinia pestis</name>
    <dbReference type="NCBI Taxonomy" id="632"/>
    <lineage>
        <taxon>Bacteria</taxon>
        <taxon>Pseudomonadati</taxon>
        <taxon>Pseudomonadota</taxon>
        <taxon>Gammaproteobacteria</taxon>
        <taxon>Enterobacterales</taxon>
        <taxon>Yersiniaceae</taxon>
        <taxon>Yersinia</taxon>
    </lineage>
</organism>
<sequence>MKNTYNLRSIAAKAISQVLDQGQSLSAVLPELQKNISDKDRALLQELCFGTLRVLPQLEWCIQQLMARPMTGKQRVFHYLIMVGLYQLIYTRIPPHAALAETVEGATVLKRPQLKGLINGVLRQFQRQQVELLERAVNNDSHYLHPSWLLARIKQAYPAQWQQILDANNQRPPMWLRVNRLHHSRSEYLELLTQADINAEPHPIYRDAVRLITPCAVNHLPGFELGWVTVQDASAQGCVDLLDPQNGEQILDLCAAPGGKTTHILEAAPKAHVLAVDIDEQRLSRVKENLQRLQLQAVVRVGDGRAPDTWCGDQQFDRILLDAPCSATGVIRRHPDIKWLRRDRDISELAQLQSEIIEAIWPKLKHGGVLVYATCSILPEENQQQIAAFLQRHPEAQLTETGTTAAPGKQNLPHPEDGDGFFYAKIIKK</sequence>
<protein>
    <recommendedName>
        <fullName evidence="1">Ribosomal RNA small subunit methyltransferase B</fullName>
        <ecNumber evidence="1">2.1.1.176</ecNumber>
    </recommendedName>
    <alternativeName>
        <fullName evidence="1">16S rRNA m5C967 methyltransferase</fullName>
    </alternativeName>
    <alternativeName>
        <fullName evidence="1">rRNA (cytosine-C(5)-)-methyltransferase RsmB</fullName>
    </alternativeName>
</protein>
<accession>Q8ZJ81</accession>
<accession>Q0WK67</accession>
<gene>
    <name evidence="1" type="primary">rsmB</name>
    <name type="synonym">rrmB</name>
    <name evidence="1" type="synonym">sun</name>
    <name type="ordered locus">YPO0240</name>
    <name type="ordered locus">y4021</name>
    <name type="ordered locus">YP_0238</name>
</gene>
<comment type="function">
    <text evidence="1">Specifically methylates the cytosine at position 967 (m5C967) of 16S rRNA.</text>
</comment>
<comment type="catalytic activity">
    <reaction evidence="1">
        <text>cytidine(967) in 16S rRNA + S-adenosyl-L-methionine = 5-methylcytidine(967) in 16S rRNA + S-adenosyl-L-homocysteine + H(+)</text>
        <dbReference type="Rhea" id="RHEA:42748"/>
        <dbReference type="Rhea" id="RHEA-COMP:10219"/>
        <dbReference type="Rhea" id="RHEA-COMP:10220"/>
        <dbReference type="ChEBI" id="CHEBI:15378"/>
        <dbReference type="ChEBI" id="CHEBI:57856"/>
        <dbReference type="ChEBI" id="CHEBI:59789"/>
        <dbReference type="ChEBI" id="CHEBI:74483"/>
        <dbReference type="ChEBI" id="CHEBI:82748"/>
        <dbReference type="EC" id="2.1.1.176"/>
    </reaction>
</comment>
<comment type="subcellular location">
    <subcellularLocation>
        <location evidence="1">Cytoplasm</location>
    </subcellularLocation>
</comment>
<comment type="similarity">
    <text evidence="1">Belongs to the class I-like SAM-binding methyltransferase superfamily. RsmB/NOP family.</text>
</comment>
<comment type="sequence caution" evidence="2">
    <conflict type="erroneous initiation">
        <sequence resource="EMBL-CDS" id="AAS60514"/>
    </conflict>
</comment>
<reference key="1">
    <citation type="journal article" date="2001" name="Nature">
        <title>Genome sequence of Yersinia pestis, the causative agent of plague.</title>
        <authorList>
            <person name="Parkhill J."/>
            <person name="Wren B.W."/>
            <person name="Thomson N.R."/>
            <person name="Titball R.W."/>
            <person name="Holden M.T.G."/>
            <person name="Prentice M.B."/>
            <person name="Sebaihia M."/>
            <person name="James K.D."/>
            <person name="Churcher C.M."/>
            <person name="Mungall K.L."/>
            <person name="Baker S."/>
            <person name="Basham D."/>
            <person name="Bentley S.D."/>
            <person name="Brooks K."/>
            <person name="Cerdeno-Tarraga A.-M."/>
            <person name="Chillingworth T."/>
            <person name="Cronin A."/>
            <person name="Davies R.M."/>
            <person name="Davis P."/>
            <person name="Dougan G."/>
            <person name="Feltwell T."/>
            <person name="Hamlin N."/>
            <person name="Holroyd S."/>
            <person name="Jagels K."/>
            <person name="Karlyshev A.V."/>
            <person name="Leather S."/>
            <person name="Moule S."/>
            <person name="Oyston P.C.F."/>
            <person name="Quail M.A."/>
            <person name="Rutherford K.M."/>
            <person name="Simmonds M."/>
            <person name="Skelton J."/>
            <person name="Stevens K."/>
            <person name="Whitehead S."/>
            <person name="Barrell B.G."/>
        </authorList>
    </citation>
    <scope>NUCLEOTIDE SEQUENCE [LARGE SCALE GENOMIC DNA]</scope>
    <source>
        <strain>CO-92 / Biovar Orientalis</strain>
    </source>
</reference>
<reference key="2">
    <citation type="journal article" date="2002" name="J. Bacteriol.">
        <title>Genome sequence of Yersinia pestis KIM.</title>
        <authorList>
            <person name="Deng W."/>
            <person name="Burland V."/>
            <person name="Plunkett G. III"/>
            <person name="Boutin A."/>
            <person name="Mayhew G.F."/>
            <person name="Liss P."/>
            <person name="Perna N.T."/>
            <person name="Rose D.J."/>
            <person name="Mau B."/>
            <person name="Zhou S."/>
            <person name="Schwartz D.C."/>
            <person name="Fetherston J.D."/>
            <person name="Lindler L.E."/>
            <person name="Brubaker R.R."/>
            <person name="Plano G.V."/>
            <person name="Straley S.C."/>
            <person name="McDonough K.A."/>
            <person name="Nilles M.L."/>
            <person name="Matson J.S."/>
            <person name="Blattner F.R."/>
            <person name="Perry R.D."/>
        </authorList>
    </citation>
    <scope>NUCLEOTIDE SEQUENCE [LARGE SCALE GENOMIC DNA]</scope>
    <source>
        <strain>KIM10+ / Biovar Mediaevalis</strain>
    </source>
</reference>
<reference key="3">
    <citation type="journal article" date="2004" name="DNA Res.">
        <title>Complete genome sequence of Yersinia pestis strain 91001, an isolate avirulent to humans.</title>
        <authorList>
            <person name="Song Y."/>
            <person name="Tong Z."/>
            <person name="Wang J."/>
            <person name="Wang L."/>
            <person name="Guo Z."/>
            <person name="Han Y."/>
            <person name="Zhang J."/>
            <person name="Pei D."/>
            <person name="Zhou D."/>
            <person name="Qin H."/>
            <person name="Pang X."/>
            <person name="Han Y."/>
            <person name="Zhai J."/>
            <person name="Li M."/>
            <person name="Cui B."/>
            <person name="Qi Z."/>
            <person name="Jin L."/>
            <person name="Dai R."/>
            <person name="Chen F."/>
            <person name="Li S."/>
            <person name="Ye C."/>
            <person name="Du Z."/>
            <person name="Lin W."/>
            <person name="Wang J."/>
            <person name="Yu J."/>
            <person name="Yang H."/>
            <person name="Wang J."/>
            <person name="Huang P."/>
            <person name="Yang R."/>
        </authorList>
    </citation>
    <scope>NUCLEOTIDE SEQUENCE [LARGE SCALE GENOMIC DNA]</scope>
    <source>
        <strain>91001 / Biovar Mediaevalis</strain>
    </source>
</reference>
<proteinExistence type="inferred from homology"/>
<dbReference type="EC" id="2.1.1.176" evidence="1"/>
<dbReference type="EMBL" id="AL590842">
    <property type="protein sequence ID" value="CAL18923.1"/>
    <property type="molecule type" value="Genomic_DNA"/>
</dbReference>
<dbReference type="EMBL" id="AE009952">
    <property type="protein sequence ID" value="AAM87565.1"/>
    <property type="molecule type" value="Genomic_DNA"/>
</dbReference>
<dbReference type="EMBL" id="AE017042">
    <property type="protein sequence ID" value="AAS60514.1"/>
    <property type="status" value="ALT_INIT"/>
    <property type="molecule type" value="Genomic_DNA"/>
</dbReference>
<dbReference type="PIR" id="AI0029">
    <property type="entry name" value="AI0029"/>
</dbReference>
<dbReference type="RefSeq" id="WP_002215705.1">
    <property type="nucleotide sequence ID" value="NZ_WUCM01000078.1"/>
</dbReference>
<dbReference type="RefSeq" id="YP_002345321.1">
    <property type="nucleotide sequence ID" value="NC_003143.1"/>
</dbReference>
<dbReference type="SMR" id="Q8ZJ81"/>
<dbReference type="STRING" id="214092.YPO0240"/>
<dbReference type="PaxDb" id="214092-YPO0240"/>
<dbReference type="DNASU" id="1148968"/>
<dbReference type="EnsemblBacteria" id="AAS60514">
    <property type="protein sequence ID" value="AAS60514"/>
    <property type="gene ID" value="YP_0238"/>
</dbReference>
<dbReference type="GeneID" id="57974364"/>
<dbReference type="KEGG" id="ype:YPO0240"/>
<dbReference type="KEGG" id="ypk:y4021"/>
<dbReference type="KEGG" id="ypm:YP_0238"/>
<dbReference type="PATRIC" id="fig|214092.21.peg.468"/>
<dbReference type="eggNOG" id="COG0144">
    <property type="taxonomic scope" value="Bacteria"/>
</dbReference>
<dbReference type="eggNOG" id="COG0781">
    <property type="taxonomic scope" value="Bacteria"/>
</dbReference>
<dbReference type="HOGENOM" id="CLU_005316_0_4_6"/>
<dbReference type="OMA" id="RVNRQHH"/>
<dbReference type="OrthoDB" id="9810297at2"/>
<dbReference type="Proteomes" id="UP000000815">
    <property type="component" value="Chromosome"/>
</dbReference>
<dbReference type="Proteomes" id="UP000001019">
    <property type="component" value="Chromosome"/>
</dbReference>
<dbReference type="Proteomes" id="UP000002490">
    <property type="component" value="Chromosome"/>
</dbReference>
<dbReference type="GO" id="GO:0005829">
    <property type="term" value="C:cytosol"/>
    <property type="evidence" value="ECO:0000318"/>
    <property type="project" value="GO_Central"/>
</dbReference>
<dbReference type="GO" id="GO:0003723">
    <property type="term" value="F:RNA binding"/>
    <property type="evidence" value="ECO:0007669"/>
    <property type="project" value="UniProtKB-KW"/>
</dbReference>
<dbReference type="GO" id="GO:0009383">
    <property type="term" value="F:rRNA (cytosine-C5-)-methyltransferase activity"/>
    <property type="evidence" value="ECO:0000318"/>
    <property type="project" value="GO_Central"/>
</dbReference>
<dbReference type="GO" id="GO:0006355">
    <property type="term" value="P:regulation of DNA-templated transcription"/>
    <property type="evidence" value="ECO:0007669"/>
    <property type="project" value="InterPro"/>
</dbReference>
<dbReference type="GO" id="GO:0070475">
    <property type="term" value="P:rRNA base methylation"/>
    <property type="evidence" value="ECO:0000318"/>
    <property type="project" value="GO_Central"/>
</dbReference>
<dbReference type="CDD" id="cd02440">
    <property type="entry name" value="AdoMet_MTases"/>
    <property type="match status" value="1"/>
</dbReference>
<dbReference type="CDD" id="cd00620">
    <property type="entry name" value="Methyltransferase_Sun"/>
    <property type="match status" value="1"/>
</dbReference>
<dbReference type="FunFam" id="1.10.287.730:FF:000001">
    <property type="entry name" value="Ribosomal RNA small subunit methyltransferase B"/>
    <property type="match status" value="1"/>
</dbReference>
<dbReference type="FunFam" id="1.10.940.10:FF:000002">
    <property type="entry name" value="Ribosomal RNA small subunit methyltransferase B"/>
    <property type="match status" value="1"/>
</dbReference>
<dbReference type="FunFam" id="3.30.70.1170:FF:000002">
    <property type="entry name" value="Ribosomal RNA small subunit methyltransferase B"/>
    <property type="match status" value="1"/>
</dbReference>
<dbReference type="FunFam" id="3.40.50.150:FF:000022">
    <property type="entry name" value="Ribosomal RNA small subunit methyltransferase B"/>
    <property type="match status" value="1"/>
</dbReference>
<dbReference type="Gene3D" id="1.10.287.730">
    <property type="entry name" value="Helix hairpin bin"/>
    <property type="match status" value="1"/>
</dbReference>
<dbReference type="Gene3D" id="1.10.940.10">
    <property type="entry name" value="NusB-like"/>
    <property type="match status" value="1"/>
</dbReference>
<dbReference type="Gene3D" id="3.30.70.1170">
    <property type="entry name" value="Sun protein, domain 3"/>
    <property type="match status" value="1"/>
</dbReference>
<dbReference type="Gene3D" id="3.40.50.150">
    <property type="entry name" value="Vaccinia Virus protein VP39"/>
    <property type="match status" value="1"/>
</dbReference>
<dbReference type="HAMAP" id="MF_01856">
    <property type="entry name" value="16SrRNA_methyltr_B"/>
    <property type="match status" value="1"/>
</dbReference>
<dbReference type="InterPro" id="IPR049560">
    <property type="entry name" value="MeTrfase_RsmB-F_NOP2_cat"/>
</dbReference>
<dbReference type="InterPro" id="IPR001678">
    <property type="entry name" value="MeTrfase_RsmB-F_NOP2_dom"/>
</dbReference>
<dbReference type="InterPro" id="IPR035926">
    <property type="entry name" value="NusB-like_sf"/>
</dbReference>
<dbReference type="InterPro" id="IPR006027">
    <property type="entry name" value="NusB_RsmB_TIM44"/>
</dbReference>
<dbReference type="InterPro" id="IPR023267">
    <property type="entry name" value="RCMT"/>
</dbReference>
<dbReference type="InterPro" id="IPR004573">
    <property type="entry name" value="rRNA_ssu_MeTfrase_B"/>
</dbReference>
<dbReference type="InterPro" id="IPR023541">
    <property type="entry name" value="rRNA_ssu_MeTfrase_B_ent"/>
</dbReference>
<dbReference type="InterPro" id="IPR054728">
    <property type="entry name" value="RsmB-like_ferredoxin"/>
</dbReference>
<dbReference type="InterPro" id="IPR048019">
    <property type="entry name" value="RsmB-like_N"/>
</dbReference>
<dbReference type="InterPro" id="IPR018314">
    <property type="entry name" value="RsmB/NOL1/NOP2-like_CS"/>
</dbReference>
<dbReference type="InterPro" id="IPR029063">
    <property type="entry name" value="SAM-dependent_MTases_sf"/>
</dbReference>
<dbReference type="NCBIfam" id="NF008149">
    <property type="entry name" value="PRK10901.1"/>
    <property type="match status" value="1"/>
</dbReference>
<dbReference type="NCBIfam" id="NF011494">
    <property type="entry name" value="PRK14902.1"/>
    <property type="match status" value="1"/>
</dbReference>
<dbReference type="NCBIfam" id="TIGR00563">
    <property type="entry name" value="rsmB"/>
    <property type="match status" value="1"/>
</dbReference>
<dbReference type="PANTHER" id="PTHR22807:SF61">
    <property type="entry name" value="NOL1_NOP2_SUN FAMILY PROTEIN _ ANTITERMINATION NUSB DOMAIN-CONTAINING PROTEIN"/>
    <property type="match status" value="1"/>
</dbReference>
<dbReference type="PANTHER" id="PTHR22807">
    <property type="entry name" value="NOP2 YEAST -RELATED NOL1/NOP2/FMU SUN DOMAIN-CONTAINING"/>
    <property type="match status" value="1"/>
</dbReference>
<dbReference type="Pfam" id="PF01189">
    <property type="entry name" value="Methyltr_RsmB-F"/>
    <property type="match status" value="1"/>
</dbReference>
<dbReference type="Pfam" id="PF01029">
    <property type="entry name" value="NusB"/>
    <property type="match status" value="1"/>
</dbReference>
<dbReference type="Pfam" id="PF22458">
    <property type="entry name" value="RsmF-B_ferredox"/>
    <property type="match status" value="1"/>
</dbReference>
<dbReference type="PRINTS" id="PR02008">
    <property type="entry name" value="RCMTFAMILY"/>
</dbReference>
<dbReference type="SUPFAM" id="SSF48013">
    <property type="entry name" value="NusB-like"/>
    <property type="match status" value="1"/>
</dbReference>
<dbReference type="SUPFAM" id="SSF53335">
    <property type="entry name" value="S-adenosyl-L-methionine-dependent methyltransferases"/>
    <property type="match status" value="1"/>
</dbReference>
<dbReference type="PROSITE" id="PS01153">
    <property type="entry name" value="NOL1_NOP2_SUN"/>
    <property type="match status" value="1"/>
</dbReference>
<dbReference type="PROSITE" id="PS51686">
    <property type="entry name" value="SAM_MT_RSMB_NOP"/>
    <property type="match status" value="1"/>
</dbReference>
<keyword id="KW-0963">Cytoplasm</keyword>
<keyword id="KW-0489">Methyltransferase</keyword>
<keyword id="KW-1185">Reference proteome</keyword>
<keyword id="KW-0694">RNA-binding</keyword>
<keyword id="KW-0698">rRNA processing</keyword>
<keyword id="KW-0949">S-adenosyl-L-methionine</keyword>
<keyword id="KW-0808">Transferase</keyword>